<organism>
    <name type="scientific">Mycobacterium tuberculosis (strain ATCC 25618 / H37Rv)</name>
    <dbReference type="NCBI Taxonomy" id="83332"/>
    <lineage>
        <taxon>Bacteria</taxon>
        <taxon>Bacillati</taxon>
        <taxon>Actinomycetota</taxon>
        <taxon>Actinomycetes</taxon>
        <taxon>Mycobacteriales</taxon>
        <taxon>Mycobacteriaceae</taxon>
        <taxon>Mycobacterium</taxon>
        <taxon>Mycobacterium tuberculosis complex</taxon>
    </lineage>
</organism>
<reference key="1">
    <citation type="journal article" date="1998" name="Nature">
        <title>Deciphering the biology of Mycobacterium tuberculosis from the complete genome sequence.</title>
        <authorList>
            <person name="Cole S.T."/>
            <person name="Brosch R."/>
            <person name="Parkhill J."/>
            <person name="Garnier T."/>
            <person name="Churcher C.M."/>
            <person name="Harris D.E."/>
            <person name="Gordon S.V."/>
            <person name="Eiglmeier K."/>
            <person name="Gas S."/>
            <person name="Barry C.E. III"/>
            <person name="Tekaia F."/>
            <person name="Badcock K."/>
            <person name="Basham D."/>
            <person name="Brown D."/>
            <person name="Chillingworth T."/>
            <person name="Connor R."/>
            <person name="Davies R.M."/>
            <person name="Devlin K."/>
            <person name="Feltwell T."/>
            <person name="Gentles S."/>
            <person name="Hamlin N."/>
            <person name="Holroyd S."/>
            <person name="Hornsby T."/>
            <person name="Jagels K."/>
            <person name="Krogh A."/>
            <person name="McLean J."/>
            <person name="Moule S."/>
            <person name="Murphy L.D."/>
            <person name="Oliver S."/>
            <person name="Osborne J."/>
            <person name="Quail M.A."/>
            <person name="Rajandream M.A."/>
            <person name="Rogers J."/>
            <person name="Rutter S."/>
            <person name="Seeger K."/>
            <person name="Skelton S."/>
            <person name="Squares S."/>
            <person name="Squares R."/>
            <person name="Sulston J.E."/>
            <person name="Taylor K."/>
            <person name="Whitehead S."/>
            <person name="Barrell B.G."/>
        </authorList>
    </citation>
    <scope>NUCLEOTIDE SEQUENCE [LARGE SCALE GENOMIC DNA]</scope>
    <source>
        <strain>ATCC 25618 / H37Rv</strain>
    </source>
</reference>
<reference key="2">
    <citation type="journal article" date="2008" name="BMC Syst. Biol.">
        <title>targetTB: a target identification pipeline for Mycobacterium tuberculosis through an interactome, reactome and genome-scale structural analysis.</title>
        <authorList>
            <person name="Raman K."/>
            <person name="Yeturu K."/>
            <person name="Chandra N."/>
        </authorList>
    </citation>
    <scope>IDENTIFICATION AS A DRUG TARGET [LARGE SCALE ANALYSIS]</scope>
</reference>
<reference key="3">
    <citation type="journal article" date="2011" name="Mol. Cell. Proteomics">
        <title>Proteogenomic analysis of Mycobacterium tuberculosis by high resolution mass spectrometry.</title>
        <authorList>
            <person name="Kelkar D.S."/>
            <person name="Kumar D."/>
            <person name="Kumar P."/>
            <person name="Balakrishnan L."/>
            <person name="Muthusamy B."/>
            <person name="Yadav A.K."/>
            <person name="Shrivastava P."/>
            <person name="Marimuthu A."/>
            <person name="Anand S."/>
            <person name="Sundaram H."/>
            <person name="Kingsbury R."/>
            <person name="Harsha H.C."/>
            <person name="Nair B."/>
            <person name="Prasad T.S."/>
            <person name="Chauhan D.S."/>
            <person name="Katoch K."/>
            <person name="Katoch V.M."/>
            <person name="Kumar P."/>
            <person name="Chaerkady R."/>
            <person name="Ramachandran S."/>
            <person name="Dash D."/>
            <person name="Pandey A."/>
        </authorList>
    </citation>
    <scope>IDENTIFICATION BY MASS SPECTROMETRY [LARGE SCALE ANALYSIS]</scope>
    <source>
        <strain>ATCC 25618 / H37Rv</strain>
    </source>
</reference>
<reference key="4">
    <citation type="journal article" date="2015" name="ACS Chem. Biol.">
        <title>2-Carboxyquinoxalines kill Mycobacterium tuberculosis through noncovalent inhibition of DprE1.</title>
        <authorList>
            <person name="Neres J."/>
            <person name="Hartkoorn R.C."/>
            <person name="Chiarelli L.R."/>
            <person name="Gadupudi R."/>
            <person name="Pasca M.R."/>
            <person name="Mori G."/>
            <person name="Venturelli A."/>
            <person name="Savina S."/>
            <person name="Makarov V."/>
            <person name="Kolly G.S."/>
            <person name="Molteni E."/>
            <person name="Binda C."/>
            <person name="Dhar N."/>
            <person name="Ferrari S."/>
            <person name="Brodin P."/>
            <person name="Delorme V."/>
            <person name="Landry V."/>
            <person name="de Jesus Lopes Ribeiro A.L."/>
            <person name="Farina D."/>
            <person name="Saxena P."/>
            <person name="Pojer F."/>
            <person name="Carta A."/>
            <person name="Luciani R."/>
            <person name="Porta A."/>
            <person name="Zanoni G."/>
            <person name="De Rossi E."/>
            <person name="Costi M.P."/>
            <person name="Riccardi G."/>
            <person name="Cole S.T."/>
        </authorList>
    </citation>
    <scope>FUNCTION</scope>
    <scope>INDUCTION</scope>
</reference>
<reference key="5">
    <citation type="journal article" date="2018" name="Biochem. Biophys. Res. Commun.">
        <title>Biophysical and biochemical characterization of Rv3405c, a tetracycline repressor protein from Mycobacterium tuberculosis.</title>
        <authorList>
            <person name="Gopalan A."/>
            <person name="Bhagavat R."/>
            <person name="Chandra N."/>
            <person name="Subbarao S.H."/>
            <person name="Raja A."/>
            <person name="Bethunaickan R."/>
        </authorList>
    </citation>
    <scope>FUNCTION</scope>
    <scope>DNA-BINDING</scope>
    <scope>ACTIVITY REGULATION</scope>
    <scope>INDUCTION</scope>
    <scope>DOMAIN</scope>
    <scope>MUTAGENESIS OF HIS-52; ARG-57 AND LYS-62</scope>
    <source>
        <strain>H37Rv</strain>
    </source>
</reference>
<accession>P9WMC3</accession>
<accession>L0TE16</accession>
<accession>P67442</accession>
<accession>Q50720</accession>
<sequence>MTTRPATDRRKMPTGREEVAAAILQAATDLFAERGPAATSIRDIAARSKVNHGLVFRHFGTKDQLVGAVLDHLGTKLTRLLHSEAPADIIERALDRHGRVLARALLDGYPVGQLQQRFPNVAELLDAVRPRYDSDLGARLAVAHALALQFGWRLFAPMLRSATGIDELTGDELRLSVNDAVARILEPH</sequence>
<comment type="function">
    <text evidence="3 4">Negatively regulates the expression of sulfate ester dioxygenase Rv3406 and its own expression (PubMed:25427196, PubMed:29395080). Binds specifically to the inverted repeat sequence of the intergenic region between Rv3405c and Rv3406 (PubMed:29395080).</text>
</comment>
<comment type="activity regulation">
    <text evidence="4">Specifically binds to tetracycline, which leads to a conformational change in the structure of the protein and inhibits the DNA binding activity.</text>
</comment>
<comment type="induction">
    <text evidence="3 4">Negatively autoregulated.</text>
</comment>
<comment type="domain">
    <text evidence="4">Contains an N-terminal DNA-binding domain and a C-terminal ligand binding pocket.</text>
</comment>
<comment type="miscellaneous">
    <text evidence="2">Was identified as a high-confidence drug target.</text>
</comment>
<protein>
    <recommendedName>
        <fullName evidence="5">HTH-type transcriptional repressor Rv3405c</fullName>
    </recommendedName>
</protein>
<name>HTHR_MYCTU</name>
<proteinExistence type="evidence at protein level"/>
<gene>
    <name type="ordered locus">Rv3405c</name>
    <name type="ORF">MTCY78.23</name>
</gene>
<evidence type="ECO:0000255" key="1">
    <source>
        <dbReference type="PROSITE-ProRule" id="PRU00335"/>
    </source>
</evidence>
<evidence type="ECO:0000269" key="2">
    <source>
    </source>
</evidence>
<evidence type="ECO:0000269" key="3">
    <source>
    </source>
</evidence>
<evidence type="ECO:0000269" key="4">
    <source>
    </source>
</evidence>
<evidence type="ECO:0000305" key="5"/>
<feature type="chain" id="PRO_0000070672" description="HTH-type transcriptional repressor Rv3405c">
    <location>
        <begin position="1"/>
        <end position="188"/>
    </location>
</feature>
<feature type="domain" description="HTH tetR-type" evidence="1">
    <location>
        <begin position="17"/>
        <end position="77"/>
    </location>
</feature>
<feature type="DNA-binding region" description="H-T-H motif" evidence="1">
    <location>
        <begin position="40"/>
        <end position="59"/>
    </location>
</feature>
<feature type="mutagenesis site" description="Abolishes DNA-binding and repressor activity; when associated with A-57 and A-62." evidence="4">
    <original>H</original>
    <variation>A</variation>
    <location>
        <position position="52"/>
    </location>
</feature>
<feature type="mutagenesis site" description="Abolishes DNA-binding and repressor activity; when associated with A-52 and A-62." evidence="4">
    <original>R</original>
    <variation>A</variation>
    <location>
        <position position="57"/>
    </location>
</feature>
<feature type="mutagenesis site" description="Abolishes DNA-binding and repressor activity; when associated with A-52 and A-57." evidence="4">
    <original>K</original>
    <variation>A</variation>
    <location>
        <position position="62"/>
    </location>
</feature>
<dbReference type="EMBL" id="AL123456">
    <property type="protein sequence ID" value="CCP46227.1"/>
    <property type="molecule type" value="Genomic_DNA"/>
</dbReference>
<dbReference type="PIR" id="B70736">
    <property type="entry name" value="B70736"/>
</dbReference>
<dbReference type="RefSeq" id="NP_217922.1">
    <property type="nucleotide sequence ID" value="NC_000962.3"/>
</dbReference>
<dbReference type="RefSeq" id="WP_003417984.1">
    <property type="nucleotide sequence ID" value="NZ_NVQJ01000027.1"/>
</dbReference>
<dbReference type="SMR" id="P9WMC3"/>
<dbReference type="STRING" id="83332.Rv3405c"/>
<dbReference type="PaxDb" id="83332-Rv3405c"/>
<dbReference type="DNASU" id="887940"/>
<dbReference type="GeneID" id="887940"/>
<dbReference type="KEGG" id="mtu:Rv3405c"/>
<dbReference type="KEGG" id="mtv:RVBD_3405c"/>
<dbReference type="TubercuList" id="Rv3405c"/>
<dbReference type="eggNOG" id="COG1309">
    <property type="taxonomic scope" value="Bacteria"/>
</dbReference>
<dbReference type="InParanoid" id="P9WMC3"/>
<dbReference type="OrthoDB" id="3210235at2"/>
<dbReference type="PhylomeDB" id="P9WMC3"/>
<dbReference type="Proteomes" id="UP000001584">
    <property type="component" value="Chromosome"/>
</dbReference>
<dbReference type="GO" id="GO:0003700">
    <property type="term" value="F:DNA-binding transcription factor activity"/>
    <property type="evidence" value="ECO:0000318"/>
    <property type="project" value="GO_Central"/>
</dbReference>
<dbReference type="GO" id="GO:0000976">
    <property type="term" value="F:transcription cis-regulatory region binding"/>
    <property type="evidence" value="ECO:0000318"/>
    <property type="project" value="GO_Central"/>
</dbReference>
<dbReference type="GO" id="GO:0006355">
    <property type="term" value="P:regulation of DNA-templated transcription"/>
    <property type="evidence" value="ECO:0000318"/>
    <property type="project" value="GO_Central"/>
</dbReference>
<dbReference type="Gene3D" id="1.10.357.10">
    <property type="entry name" value="Tetracycline Repressor, domain 2"/>
    <property type="match status" value="1"/>
</dbReference>
<dbReference type="InterPro" id="IPR023772">
    <property type="entry name" value="DNA-bd_HTH_TetR-type_CS"/>
</dbReference>
<dbReference type="InterPro" id="IPR009057">
    <property type="entry name" value="Homeodomain-like_sf"/>
</dbReference>
<dbReference type="InterPro" id="IPR050109">
    <property type="entry name" value="HTH-type_TetR-like_transc_reg"/>
</dbReference>
<dbReference type="InterPro" id="IPR001647">
    <property type="entry name" value="HTH_TetR"/>
</dbReference>
<dbReference type="PANTHER" id="PTHR30055">
    <property type="entry name" value="HTH-TYPE TRANSCRIPTIONAL REGULATOR RUTR"/>
    <property type="match status" value="1"/>
</dbReference>
<dbReference type="PANTHER" id="PTHR30055:SF153">
    <property type="entry name" value="HTH-TYPE TRANSCRIPTIONAL REPRESSOR RV3405C"/>
    <property type="match status" value="1"/>
</dbReference>
<dbReference type="Pfam" id="PF00440">
    <property type="entry name" value="TetR_N"/>
    <property type="match status" value="1"/>
</dbReference>
<dbReference type="PRINTS" id="PR00455">
    <property type="entry name" value="HTHTETR"/>
</dbReference>
<dbReference type="SUPFAM" id="SSF46689">
    <property type="entry name" value="Homeodomain-like"/>
    <property type="match status" value="1"/>
</dbReference>
<dbReference type="PROSITE" id="PS01081">
    <property type="entry name" value="HTH_TETR_1"/>
    <property type="match status" value="1"/>
</dbReference>
<dbReference type="PROSITE" id="PS50977">
    <property type="entry name" value="HTH_TETR_2"/>
    <property type="match status" value="1"/>
</dbReference>
<keyword id="KW-0238">DNA-binding</keyword>
<keyword id="KW-1185">Reference proteome</keyword>
<keyword id="KW-0678">Repressor</keyword>
<keyword id="KW-0804">Transcription</keyword>
<keyword id="KW-0805">Transcription regulation</keyword>